<accession>A9BPS6</accession>
<reference key="1">
    <citation type="submission" date="2007-11" db="EMBL/GenBank/DDBJ databases">
        <title>Complete sequence of Delftia acidovorans DSM 14801 / SPH-1.</title>
        <authorList>
            <person name="Copeland A."/>
            <person name="Lucas S."/>
            <person name="Lapidus A."/>
            <person name="Barry K."/>
            <person name="Glavina del Rio T."/>
            <person name="Dalin E."/>
            <person name="Tice H."/>
            <person name="Pitluck S."/>
            <person name="Lowry S."/>
            <person name="Clum A."/>
            <person name="Schmutz J."/>
            <person name="Larimer F."/>
            <person name="Land M."/>
            <person name="Hauser L."/>
            <person name="Kyrpides N."/>
            <person name="Kim E."/>
            <person name="Schleheck D."/>
            <person name="Richardson P."/>
        </authorList>
    </citation>
    <scope>NUCLEOTIDE SEQUENCE [LARGE SCALE GENOMIC DNA]</scope>
    <source>
        <strain>DSM 14801 / SPH-1</strain>
    </source>
</reference>
<protein>
    <recommendedName>
        <fullName evidence="1">Large ribosomal subunit protein uL29</fullName>
    </recommendedName>
    <alternativeName>
        <fullName evidence="2">50S ribosomal protein L29</fullName>
    </alternativeName>
</protein>
<evidence type="ECO:0000255" key="1">
    <source>
        <dbReference type="HAMAP-Rule" id="MF_00374"/>
    </source>
</evidence>
<evidence type="ECO:0000305" key="2"/>
<keyword id="KW-1185">Reference proteome</keyword>
<keyword id="KW-0687">Ribonucleoprotein</keyword>
<keyword id="KW-0689">Ribosomal protein</keyword>
<name>RL29_DELAS</name>
<proteinExistence type="inferred from homology"/>
<feature type="chain" id="PRO_1000121759" description="Large ribosomal subunit protein uL29">
    <location>
        <begin position="1"/>
        <end position="65"/>
    </location>
</feature>
<dbReference type="EMBL" id="CP000884">
    <property type="protein sequence ID" value="ABX33045.1"/>
    <property type="molecule type" value="Genomic_DNA"/>
</dbReference>
<dbReference type="RefSeq" id="WP_012202337.1">
    <property type="nucleotide sequence ID" value="NC_010002.1"/>
</dbReference>
<dbReference type="SMR" id="A9BPS6"/>
<dbReference type="STRING" id="398578.Daci_0399"/>
<dbReference type="GeneID" id="94689741"/>
<dbReference type="KEGG" id="dac:Daci_0399"/>
<dbReference type="eggNOG" id="COG0255">
    <property type="taxonomic scope" value="Bacteria"/>
</dbReference>
<dbReference type="HOGENOM" id="CLU_158491_1_1_4"/>
<dbReference type="Proteomes" id="UP000000784">
    <property type="component" value="Chromosome"/>
</dbReference>
<dbReference type="GO" id="GO:0022625">
    <property type="term" value="C:cytosolic large ribosomal subunit"/>
    <property type="evidence" value="ECO:0007669"/>
    <property type="project" value="TreeGrafter"/>
</dbReference>
<dbReference type="GO" id="GO:0003735">
    <property type="term" value="F:structural constituent of ribosome"/>
    <property type="evidence" value="ECO:0007669"/>
    <property type="project" value="InterPro"/>
</dbReference>
<dbReference type="GO" id="GO:0006412">
    <property type="term" value="P:translation"/>
    <property type="evidence" value="ECO:0007669"/>
    <property type="project" value="UniProtKB-UniRule"/>
</dbReference>
<dbReference type="CDD" id="cd00427">
    <property type="entry name" value="Ribosomal_L29_HIP"/>
    <property type="match status" value="1"/>
</dbReference>
<dbReference type="FunFam" id="1.10.287.310:FF:000001">
    <property type="entry name" value="50S ribosomal protein L29"/>
    <property type="match status" value="1"/>
</dbReference>
<dbReference type="Gene3D" id="1.10.287.310">
    <property type="match status" value="1"/>
</dbReference>
<dbReference type="HAMAP" id="MF_00374">
    <property type="entry name" value="Ribosomal_uL29"/>
    <property type="match status" value="1"/>
</dbReference>
<dbReference type="InterPro" id="IPR050063">
    <property type="entry name" value="Ribosomal_protein_uL29"/>
</dbReference>
<dbReference type="InterPro" id="IPR001854">
    <property type="entry name" value="Ribosomal_uL29"/>
</dbReference>
<dbReference type="InterPro" id="IPR018254">
    <property type="entry name" value="Ribosomal_uL29_CS"/>
</dbReference>
<dbReference type="InterPro" id="IPR036049">
    <property type="entry name" value="Ribosomal_uL29_sf"/>
</dbReference>
<dbReference type="NCBIfam" id="TIGR00012">
    <property type="entry name" value="L29"/>
    <property type="match status" value="1"/>
</dbReference>
<dbReference type="PANTHER" id="PTHR10916">
    <property type="entry name" value="60S RIBOSOMAL PROTEIN L35/50S RIBOSOMAL PROTEIN L29"/>
    <property type="match status" value="1"/>
</dbReference>
<dbReference type="PANTHER" id="PTHR10916:SF0">
    <property type="entry name" value="LARGE RIBOSOMAL SUBUNIT PROTEIN UL29C"/>
    <property type="match status" value="1"/>
</dbReference>
<dbReference type="Pfam" id="PF00831">
    <property type="entry name" value="Ribosomal_L29"/>
    <property type="match status" value="1"/>
</dbReference>
<dbReference type="SUPFAM" id="SSF46561">
    <property type="entry name" value="Ribosomal protein L29 (L29p)"/>
    <property type="match status" value="1"/>
</dbReference>
<dbReference type="PROSITE" id="PS00579">
    <property type="entry name" value="RIBOSOMAL_L29"/>
    <property type="match status" value="1"/>
</dbReference>
<comment type="similarity">
    <text evidence="1">Belongs to the universal ribosomal protein uL29 family.</text>
</comment>
<sequence length="65" mass="7235">MTKAAELRQKDVAGLEAEVKSLQKAHFGLRMQKATQQLGNTNTLRTTRRDIARAKTILAEKQAAK</sequence>
<organism>
    <name type="scientific">Delftia acidovorans (strain DSM 14801 / SPH-1)</name>
    <dbReference type="NCBI Taxonomy" id="398578"/>
    <lineage>
        <taxon>Bacteria</taxon>
        <taxon>Pseudomonadati</taxon>
        <taxon>Pseudomonadota</taxon>
        <taxon>Betaproteobacteria</taxon>
        <taxon>Burkholderiales</taxon>
        <taxon>Comamonadaceae</taxon>
        <taxon>Delftia</taxon>
    </lineage>
</organism>
<gene>
    <name evidence="1" type="primary">rpmC</name>
    <name type="ordered locus">Daci_0399</name>
</gene>